<reference key="1">
    <citation type="submission" date="2003-06" db="EMBL/GenBank/DDBJ databases">
        <authorList>
            <consortium name="NIH - Zebrafish Gene Collection (ZGC) project"/>
        </authorList>
    </citation>
    <scope>NUCLEOTIDE SEQUENCE [LARGE SCALE MRNA]</scope>
    <source>
        <tissue>Kidney</tissue>
    </source>
</reference>
<dbReference type="EMBL" id="BC053265">
    <property type="protein sequence ID" value="AAH53265.1"/>
    <property type="molecule type" value="mRNA"/>
</dbReference>
<dbReference type="RefSeq" id="NP_956674.1">
    <property type="nucleotide sequence ID" value="NM_200380.1"/>
</dbReference>
<dbReference type="SMR" id="Q7T339"/>
<dbReference type="FunCoup" id="Q7T339">
    <property type="interactions" value="2891"/>
</dbReference>
<dbReference type="STRING" id="7955.ENSDARP00000138817"/>
<dbReference type="PaxDb" id="7955-ENSDARP00000061395"/>
<dbReference type="Ensembl" id="ENSDART00000165390">
    <property type="protein sequence ID" value="ENSDARP00000138817"/>
    <property type="gene ID" value="ENSDARG00000103718"/>
</dbReference>
<dbReference type="GeneID" id="393351"/>
<dbReference type="KEGG" id="dre:393351"/>
<dbReference type="AGR" id="ZFIN:ZDB-GENE-040426-1374"/>
<dbReference type="CTD" id="393351"/>
<dbReference type="ZFIN" id="ZDB-GENE-040426-1374">
    <property type="gene designation" value="chmp5b"/>
</dbReference>
<dbReference type="eggNOG" id="KOG1655">
    <property type="taxonomic scope" value="Eukaryota"/>
</dbReference>
<dbReference type="HOGENOM" id="CLU_079409_1_0_1"/>
<dbReference type="InParanoid" id="Q7T339"/>
<dbReference type="OMA" id="GVKQMQK"/>
<dbReference type="OrthoDB" id="3973241at2759"/>
<dbReference type="PhylomeDB" id="Q7T339"/>
<dbReference type="TreeFam" id="TF300122"/>
<dbReference type="PRO" id="PR:Q7T339"/>
<dbReference type="Proteomes" id="UP000000437">
    <property type="component" value="Chromosome 7"/>
</dbReference>
<dbReference type="Bgee" id="ENSDARG00000103718">
    <property type="expression patterns" value="Expressed in testis and 31 other cell types or tissues"/>
</dbReference>
<dbReference type="GO" id="GO:0005829">
    <property type="term" value="C:cytosol"/>
    <property type="evidence" value="ECO:0007669"/>
    <property type="project" value="UniProtKB-SubCell"/>
</dbReference>
<dbReference type="GO" id="GO:0010008">
    <property type="term" value="C:endosome membrane"/>
    <property type="evidence" value="ECO:0007669"/>
    <property type="project" value="UniProtKB-SubCell"/>
</dbReference>
<dbReference type="GO" id="GO:0005771">
    <property type="term" value="C:multivesicular body"/>
    <property type="evidence" value="ECO:0000318"/>
    <property type="project" value="GO_Central"/>
</dbReference>
<dbReference type="GO" id="GO:0032511">
    <property type="term" value="P:late endosome to vacuole transport via multivesicular body sorting pathway"/>
    <property type="evidence" value="ECO:0000318"/>
    <property type="project" value="GO_Central"/>
</dbReference>
<dbReference type="GO" id="GO:0015031">
    <property type="term" value="P:protein transport"/>
    <property type="evidence" value="ECO:0007669"/>
    <property type="project" value="UniProtKB-KW"/>
</dbReference>
<dbReference type="GO" id="GO:0006900">
    <property type="term" value="P:vesicle budding from membrane"/>
    <property type="evidence" value="ECO:0000318"/>
    <property type="project" value="GO_Central"/>
</dbReference>
<dbReference type="Gene3D" id="6.10.250.1710">
    <property type="match status" value="1"/>
</dbReference>
<dbReference type="Gene3D" id="1.10.287.1060">
    <property type="entry name" value="ESAT-6-like"/>
    <property type="match status" value="1"/>
</dbReference>
<dbReference type="InterPro" id="IPR005024">
    <property type="entry name" value="Snf7_fam"/>
</dbReference>
<dbReference type="PANTHER" id="PTHR22761">
    <property type="entry name" value="CHARGED MULTIVESICULAR BODY PROTEIN"/>
    <property type="match status" value="1"/>
</dbReference>
<dbReference type="PANTHER" id="PTHR22761:SF12">
    <property type="entry name" value="CHARGED MULTIVESICULAR BODY PROTEIN 5"/>
    <property type="match status" value="1"/>
</dbReference>
<dbReference type="Pfam" id="PF03357">
    <property type="entry name" value="Snf7"/>
    <property type="match status" value="1"/>
</dbReference>
<sequence length="220" mass="24769">MNRIFGRGKPKGPPPNLTDCISGVDSRAESVDKKIARLDAELMKYKDQMKKMRDGPSKNMVKQKAMRVLKQKRMYEGQRDQLMQQSFNMEQANYTIQTLKDTKTTVEAMKIGAKEMKKAYKNVKIDQIEDLQDQLEDMMEDANEVQEALSRSYGTPEIDEDDLEAELDALGDELLLDDDNSYLDEASSAPAIPEGAPGDRTTNRDGVLVDEFGLPQIPAT</sequence>
<comment type="function">
    <text evidence="1">Probable peripherally associated component of the endosomal sorting required for transport complex III (ESCRT-III) which is involved in multivesicular bodies (MVBs) formation and sorting of endosomal cargo proteins into MVBs. MVBs contain intraluminal vesicles (ILVs) that are generated by invagination and scission from the limiting membrane of the endosome and mostly are delivered to lysosomes enabling degradation of membrane proteins, such as stimulated growth factor receptors, lysosomal enzymes and lipids (By similarity).</text>
</comment>
<comment type="subunit">
    <text evidence="1">Probable peripherally associated component of the endosomal sorting required for transport complex III (ESCRT-III).</text>
</comment>
<comment type="subcellular location">
    <subcellularLocation>
        <location evidence="1">Cytoplasm</location>
        <location evidence="1">Cytosol</location>
    </subcellularLocation>
    <subcellularLocation>
        <location evidence="4">Endosome membrane</location>
        <topology evidence="4">Peripheral membrane protein</topology>
    </subcellularLocation>
</comment>
<comment type="similarity">
    <text evidence="4">Belongs to the SNF7 family.</text>
</comment>
<evidence type="ECO:0000250" key="1">
    <source>
        <dbReference type="UniProtKB" id="Q9NZZ3"/>
    </source>
</evidence>
<evidence type="ECO:0000255" key="2"/>
<evidence type="ECO:0000256" key="3">
    <source>
        <dbReference type="SAM" id="MobiDB-lite"/>
    </source>
</evidence>
<evidence type="ECO:0000305" key="4"/>
<name>CHMP5_DANRE</name>
<protein>
    <recommendedName>
        <fullName>Charged multivesicular body protein 5</fullName>
    </recommendedName>
    <alternativeName>
        <fullName>Chromatin-modifying protein 5</fullName>
    </alternativeName>
</protein>
<feature type="chain" id="PRO_0000211504" description="Charged multivesicular body protein 5">
    <location>
        <begin position="1"/>
        <end position="220"/>
    </location>
</feature>
<feature type="region of interest" description="Disordered" evidence="3">
    <location>
        <begin position="1"/>
        <end position="27"/>
    </location>
</feature>
<feature type="region of interest" description="Disordered" evidence="3">
    <location>
        <begin position="178"/>
        <end position="206"/>
    </location>
</feature>
<feature type="coiled-coil region" evidence="2">
    <location>
        <begin position="25"/>
        <end position="55"/>
    </location>
</feature>
<feature type="coiled-coil region" evidence="2">
    <location>
        <begin position="121"/>
        <end position="153"/>
    </location>
</feature>
<feature type="compositionally biased region" description="Basic residues" evidence="3">
    <location>
        <begin position="1"/>
        <end position="10"/>
    </location>
</feature>
<organism>
    <name type="scientific">Danio rerio</name>
    <name type="common">Zebrafish</name>
    <name type="synonym">Brachydanio rerio</name>
    <dbReference type="NCBI Taxonomy" id="7955"/>
    <lineage>
        <taxon>Eukaryota</taxon>
        <taxon>Metazoa</taxon>
        <taxon>Chordata</taxon>
        <taxon>Craniata</taxon>
        <taxon>Vertebrata</taxon>
        <taxon>Euteleostomi</taxon>
        <taxon>Actinopterygii</taxon>
        <taxon>Neopterygii</taxon>
        <taxon>Teleostei</taxon>
        <taxon>Ostariophysi</taxon>
        <taxon>Cypriniformes</taxon>
        <taxon>Danionidae</taxon>
        <taxon>Danioninae</taxon>
        <taxon>Danio</taxon>
    </lineage>
</organism>
<gene>
    <name type="primary">chmp5</name>
</gene>
<accession>Q7T339</accession>
<keyword id="KW-0175">Coiled coil</keyword>
<keyword id="KW-0963">Cytoplasm</keyword>
<keyword id="KW-0967">Endosome</keyword>
<keyword id="KW-0472">Membrane</keyword>
<keyword id="KW-0653">Protein transport</keyword>
<keyword id="KW-1185">Reference proteome</keyword>
<keyword id="KW-0813">Transport</keyword>
<proteinExistence type="evidence at transcript level"/>